<evidence type="ECO:0000255" key="1">
    <source>
        <dbReference type="HAMAP-Rule" id="MF_00549"/>
    </source>
</evidence>
<gene>
    <name evidence="1" type="primary">mgsA</name>
    <name type="ordered locus">Bcep1808_2376</name>
</gene>
<reference key="1">
    <citation type="submission" date="2007-03" db="EMBL/GenBank/DDBJ databases">
        <title>Complete sequence of chromosome 1 of Burkholderia vietnamiensis G4.</title>
        <authorList>
            <consortium name="US DOE Joint Genome Institute"/>
            <person name="Copeland A."/>
            <person name="Lucas S."/>
            <person name="Lapidus A."/>
            <person name="Barry K."/>
            <person name="Detter J.C."/>
            <person name="Glavina del Rio T."/>
            <person name="Hammon N."/>
            <person name="Israni S."/>
            <person name="Dalin E."/>
            <person name="Tice H."/>
            <person name="Pitluck S."/>
            <person name="Chain P."/>
            <person name="Malfatti S."/>
            <person name="Shin M."/>
            <person name="Vergez L."/>
            <person name="Schmutz J."/>
            <person name="Larimer F."/>
            <person name="Land M."/>
            <person name="Hauser L."/>
            <person name="Kyrpides N."/>
            <person name="Tiedje J."/>
            <person name="Richardson P."/>
        </authorList>
    </citation>
    <scope>NUCLEOTIDE SEQUENCE [LARGE SCALE GENOMIC DNA]</scope>
    <source>
        <strain>G4 / LMG 22486</strain>
    </source>
</reference>
<keyword id="KW-0456">Lyase</keyword>
<feature type="chain" id="PRO_1000017800" description="Methylglyoxal synthase">
    <location>
        <begin position="1"/>
        <end position="130"/>
    </location>
</feature>
<feature type="domain" description="MGS-like" evidence="1">
    <location>
        <begin position="1"/>
        <end position="130"/>
    </location>
</feature>
<feature type="active site" description="Proton donor/acceptor" evidence="1">
    <location>
        <position position="63"/>
    </location>
</feature>
<feature type="binding site" evidence="1">
    <location>
        <position position="11"/>
    </location>
    <ligand>
        <name>substrate</name>
    </ligand>
</feature>
<feature type="binding site" evidence="1">
    <location>
        <position position="15"/>
    </location>
    <ligand>
        <name>substrate</name>
    </ligand>
</feature>
<feature type="binding site" evidence="1">
    <location>
        <begin position="37"/>
        <end position="40"/>
    </location>
    <ligand>
        <name>substrate</name>
    </ligand>
</feature>
<feature type="binding site" evidence="1">
    <location>
        <begin position="57"/>
        <end position="58"/>
    </location>
    <ligand>
        <name>substrate</name>
    </ligand>
</feature>
<feature type="binding site" evidence="1">
    <location>
        <position position="90"/>
    </location>
    <ligand>
        <name>substrate</name>
    </ligand>
</feature>
<organism>
    <name type="scientific">Burkholderia vietnamiensis (strain G4 / LMG 22486)</name>
    <name type="common">Burkholderia cepacia (strain R1808)</name>
    <dbReference type="NCBI Taxonomy" id="269482"/>
    <lineage>
        <taxon>Bacteria</taxon>
        <taxon>Pseudomonadati</taxon>
        <taxon>Pseudomonadota</taxon>
        <taxon>Betaproteobacteria</taxon>
        <taxon>Burkholderiales</taxon>
        <taxon>Burkholderiaceae</taxon>
        <taxon>Burkholderia</taxon>
        <taxon>Burkholderia cepacia complex</taxon>
    </lineage>
</organism>
<comment type="function">
    <text evidence="1">Catalyzes the formation of methylglyoxal from dihydroxyacetone phosphate.</text>
</comment>
<comment type="catalytic activity">
    <reaction evidence="1">
        <text>dihydroxyacetone phosphate = methylglyoxal + phosphate</text>
        <dbReference type="Rhea" id="RHEA:17937"/>
        <dbReference type="ChEBI" id="CHEBI:17158"/>
        <dbReference type="ChEBI" id="CHEBI:43474"/>
        <dbReference type="ChEBI" id="CHEBI:57642"/>
        <dbReference type="EC" id="4.2.3.3"/>
    </reaction>
</comment>
<comment type="similarity">
    <text evidence="1">Belongs to the methylglyoxal synthase family.</text>
</comment>
<proteinExistence type="inferred from homology"/>
<dbReference type="EC" id="4.2.3.3" evidence="1"/>
<dbReference type="EMBL" id="CP000614">
    <property type="protein sequence ID" value="ABO55375.1"/>
    <property type="molecule type" value="Genomic_DNA"/>
</dbReference>
<dbReference type="SMR" id="A4JGH2"/>
<dbReference type="KEGG" id="bvi:Bcep1808_2376"/>
<dbReference type="eggNOG" id="COG1803">
    <property type="taxonomic scope" value="Bacteria"/>
</dbReference>
<dbReference type="HOGENOM" id="CLU_120420_1_0_4"/>
<dbReference type="Proteomes" id="UP000002287">
    <property type="component" value="Chromosome 1"/>
</dbReference>
<dbReference type="GO" id="GO:0005829">
    <property type="term" value="C:cytosol"/>
    <property type="evidence" value="ECO:0007669"/>
    <property type="project" value="TreeGrafter"/>
</dbReference>
<dbReference type="GO" id="GO:0008929">
    <property type="term" value="F:methylglyoxal synthase activity"/>
    <property type="evidence" value="ECO:0007669"/>
    <property type="project" value="UniProtKB-UniRule"/>
</dbReference>
<dbReference type="GO" id="GO:0019242">
    <property type="term" value="P:methylglyoxal biosynthetic process"/>
    <property type="evidence" value="ECO:0007669"/>
    <property type="project" value="UniProtKB-UniRule"/>
</dbReference>
<dbReference type="CDD" id="cd01422">
    <property type="entry name" value="MGS"/>
    <property type="match status" value="1"/>
</dbReference>
<dbReference type="Gene3D" id="3.40.50.1380">
    <property type="entry name" value="Methylglyoxal synthase-like domain"/>
    <property type="match status" value="1"/>
</dbReference>
<dbReference type="HAMAP" id="MF_00549">
    <property type="entry name" value="Methylglyoxal_synth"/>
    <property type="match status" value="1"/>
</dbReference>
<dbReference type="InterPro" id="IPR004363">
    <property type="entry name" value="Methylgl_synth"/>
</dbReference>
<dbReference type="InterPro" id="IPR018148">
    <property type="entry name" value="Methylglyoxal_synth_AS"/>
</dbReference>
<dbReference type="InterPro" id="IPR011607">
    <property type="entry name" value="MGS-like_dom"/>
</dbReference>
<dbReference type="InterPro" id="IPR036914">
    <property type="entry name" value="MGS-like_dom_sf"/>
</dbReference>
<dbReference type="NCBIfam" id="TIGR00160">
    <property type="entry name" value="MGSA"/>
    <property type="match status" value="1"/>
</dbReference>
<dbReference type="NCBIfam" id="NF003559">
    <property type="entry name" value="PRK05234.1"/>
    <property type="match status" value="1"/>
</dbReference>
<dbReference type="PANTHER" id="PTHR30492">
    <property type="entry name" value="METHYLGLYOXAL SYNTHASE"/>
    <property type="match status" value="1"/>
</dbReference>
<dbReference type="PANTHER" id="PTHR30492:SF0">
    <property type="entry name" value="METHYLGLYOXAL SYNTHASE"/>
    <property type="match status" value="1"/>
</dbReference>
<dbReference type="Pfam" id="PF02142">
    <property type="entry name" value="MGS"/>
    <property type="match status" value="1"/>
</dbReference>
<dbReference type="PIRSF" id="PIRSF006614">
    <property type="entry name" value="Methylglyox_syn"/>
    <property type="match status" value="1"/>
</dbReference>
<dbReference type="SMART" id="SM00851">
    <property type="entry name" value="MGS"/>
    <property type="match status" value="1"/>
</dbReference>
<dbReference type="SUPFAM" id="SSF52335">
    <property type="entry name" value="Methylglyoxal synthase-like"/>
    <property type="match status" value="1"/>
</dbReference>
<dbReference type="PROSITE" id="PS01335">
    <property type="entry name" value="METHYLGLYOXAL_SYNTH"/>
    <property type="match status" value="1"/>
</dbReference>
<dbReference type="PROSITE" id="PS51855">
    <property type="entry name" value="MGS"/>
    <property type="match status" value="1"/>
</dbReference>
<sequence length="130" mass="13820">MSKPRIALIAHDAKKDEIVALAGQYRNTLAQCRLVATGTTGGRIAAAHGLEVERKLSGPLGGDLQIGAELADGRVDVVVFLRDPMTAQPHDPDITALVRACDVHDVPVATNVATARMLLDDLARNMQDVC</sequence>
<name>MGSA_BURVG</name>
<protein>
    <recommendedName>
        <fullName evidence="1">Methylglyoxal synthase</fullName>
        <shortName evidence="1">MGS</shortName>
        <ecNumber evidence="1">4.2.3.3</ecNumber>
    </recommendedName>
</protein>
<accession>A4JGH2</accession>